<name>NAA20_XENLA</name>
<dbReference type="EC" id="2.3.1.254" evidence="2"/>
<dbReference type="EMBL" id="BC044290">
    <property type="protein sequence ID" value="AAH44290.1"/>
    <property type="molecule type" value="mRNA"/>
</dbReference>
<dbReference type="RefSeq" id="NP_001080646.1">
    <property type="nucleotide sequence ID" value="NM_001087177.1"/>
</dbReference>
<dbReference type="SMR" id="Q7ZXR3"/>
<dbReference type="DNASU" id="380338"/>
<dbReference type="GeneID" id="380338"/>
<dbReference type="KEGG" id="xla:380338"/>
<dbReference type="AGR" id="Xenbase:XB-GENE-6078268"/>
<dbReference type="CTD" id="380338"/>
<dbReference type="Xenbase" id="XB-GENE-6078268">
    <property type="gene designation" value="naa20.S"/>
</dbReference>
<dbReference type="OMA" id="EQHPSMR"/>
<dbReference type="OrthoDB" id="10264728at2759"/>
<dbReference type="Proteomes" id="UP000186698">
    <property type="component" value="Chromosome 5S"/>
</dbReference>
<dbReference type="Bgee" id="380338">
    <property type="expression patterns" value="Expressed in brain and 19 other cell types or tissues"/>
</dbReference>
<dbReference type="GO" id="GO:0005737">
    <property type="term" value="C:cytoplasm"/>
    <property type="evidence" value="ECO:0000250"/>
    <property type="project" value="UniProtKB"/>
</dbReference>
<dbReference type="GO" id="GO:0031416">
    <property type="term" value="C:NatB complex"/>
    <property type="evidence" value="ECO:0000318"/>
    <property type="project" value="GO_Central"/>
</dbReference>
<dbReference type="GO" id="GO:0005634">
    <property type="term" value="C:nucleus"/>
    <property type="evidence" value="ECO:0000250"/>
    <property type="project" value="UniProtKB"/>
</dbReference>
<dbReference type="GO" id="GO:0120518">
    <property type="term" value="F:protein N-terminal-methionine acetyltransferase activity"/>
    <property type="evidence" value="ECO:0007669"/>
    <property type="project" value="UniProtKB-EC"/>
</dbReference>
<dbReference type="GO" id="GO:0004596">
    <property type="term" value="F:protein-N-terminal amino-acid acetyltransferase activity"/>
    <property type="evidence" value="ECO:0000318"/>
    <property type="project" value="GO_Central"/>
</dbReference>
<dbReference type="GO" id="GO:0017190">
    <property type="term" value="P:N-terminal peptidyl-aspartic acid acetylation"/>
    <property type="evidence" value="ECO:0000250"/>
    <property type="project" value="UniProtKB"/>
</dbReference>
<dbReference type="GO" id="GO:0018002">
    <property type="term" value="P:N-terminal peptidyl-glutamic acid acetylation"/>
    <property type="evidence" value="ECO:0000250"/>
    <property type="project" value="UniProtKB"/>
</dbReference>
<dbReference type="GO" id="GO:0017192">
    <property type="term" value="P:N-terminal peptidyl-glutamine acetylation"/>
    <property type="evidence" value="ECO:0000250"/>
    <property type="project" value="UniProtKB"/>
</dbReference>
<dbReference type="GO" id="GO:0006474">
    <property type="term" value="P:N-terminal protein amino acid acetylation"/>
    <property type="evidence" value="ECO:0000250"/>
    <property type="project" value="UniProtKB"/>
</dbReference>
<dbReference type="GO" id="GO:0032956">
    <property type="term" value="P:regulation of actin cytoskeleton organization"/>
    <property type="evidence" value="ECO:0000318"/>
    <property type="project" value="GO_Central"/>
</dbReference>
<dbReference type="CDD" id="cd04301">
    <property type="entry name" value="NAT_SF"/>
    <property type="match status" value="1"/>
</dbReference>
<dbReference type="FunFam" id="3.40.630.30:FF:000015">
    <property type="entry name" value="N-alpha-acetyltransferase 20 isoform X1"/>
    <property type="match status" value="1"/>
</dbReference>
<dbReference type="Gene3D" id="3.40.630.30">
    <property type="match status" value="1"/>
</dbReference>
<dbReference type="InterPro" id="IPR016181">
    <property type="entry name" value="Acyl_CoA_acyltransferase"/>
</dbReference>
<dbReference type="InterPro" id="IPR000182">
    <property type="entry name" value="GNAT_dom"/>
</dbReference>
<dbReference type="InterPro" id="IPR051646">
    <property type="entry name" value="NatB_acetyltransferase_subunit"/>
</dbReference>
<dbReference type="PANTHER" id="PTHR45910">
    <property type="entry name" value="N-ALPHA-ACETYLTRANSFERASE 20"/>
    <property type="match status" value="1"/>
</dbReference>
<dbReference type="PANTHER" id="PTHR45910:SF1">
    <property type="entry name" value="N-ALPHA-ACETYLTRANSFERASE 20"/>
    <property type="match status" value="1"/>
</dbReference>
<dbReference type="Pfam" id="PF00583">
    <property type="entry name" value="Acetyltransf_1"/>
    <property type="match status" value="1"/>
</dbReference>
<dbReference type="SUPFAM" id="SSF55729">
    <property type="entry name" value="Acyl-CoA N-acyltransferases (Nat)"/>
    <property type="match status" value="1"/>
</dbReference>
<dbReference type="PROSITE" id="PS51186">
    <property type="entry name" value="GNAT"/>
    <property type="match status" value="1"/>
</dbReference>
<gene>
    <name type="primary">naa20</name>
    <name type="synonym">nat5</name>
</gene>
<sequence>MTTLRAFTCDDLFRFNNINLDPLTETYGIPFYLQYLAHWPEYFIVAEAPGGELMGYIMGKAEGSVAREEWHGHVTALSVAPEFRRLGLAAKLMELLEEISERKGGFFVDLFVRVSNQVAVNMYKQLGYSVYRTVIEYYSASNGEPDEDAYDMRKALSRDTEKKSIVPLPHPVRPEDIE</sequence>
<keyword id="KW-0012">Acyltransferase</keyword>
<keyword id="KW-0963">Cytoplasm</keyword>
<keyword id="KW-0539">Nucleus</keyword>
<keyword id="KW-1185">Reference proteome</keyword>
<keyword id="KW-0808">Transferase</keyword>
<protein>
    <recommendedName>
        <fullName>N-alpha-acetyltransferase 20</fullName>
        <ecNumber evidence="2">2.3.1.254</ecNumber>
    </recommendedName>
    <alternativeName>
        <fullName>Methionine N-acetyltransferase</fullName>
    </alternativeName>
    <alternativeName>
        <fullName>N-acetyltransferase 5</fullName>
    </alternativeName>
    <alternativeName>
        <fullName>N-terminal acetyltransferase B complex catalytic subunit NAA20</fullName>
    </alternativeName>
    <alternativeName>
        <fullName>N-terminal acetyltransferase B complex catalytic subunit NAT5</fullName>
        <shortName>NatB complex subunit NAT5</shortName>
    </alternativeName>
    <alternativeName>
        <fullName>NatB catalytic subunit</fullName>
    </alternativeName>
</protein>
<accession>Q7ZXR3</accession>
<proteinExistence type="evidence at transcript level"/>
<reference key="1">
    <citation type="submission" date="2003-01" db="EMBL/GenBank/DDBJ databases">
        <authorList>
            <consortium name="NIH - Xenopus Gene Collection (XGC) project"/>
        </authorList>
    </citation>
    <scope>NUCLEOTIDE SEQUENCE [LARGE SCALE MRNA]</scope>
    <source>
        <tissue>Embryo</tissue>
    </source>
</reference>
<comment type="function">
    <text evidence="2">Catalytic subunit of the NatB complex which catalyzes acetylation of the N-terminal methionine residues of peptides beginning with Met-Asp, Met-Glu, Met-Asn and Met-Gln. Proteins with cell cycle functions are overrepresented in the pool of NatB substrates. Required for maintaining the structure and function of actomyosin fibers and for proper cellular migration.</text>
</comment>
<comment type="catalytic activity">
    <reaction evidence="2">
        <text>N-terminal L-methionyl-L-asparaginyl-[protein] + acetyl-CoA = N-terminal N(alpha)-acetyl-L-methionyl-L-asparaginyl-[protein] + CoA + H(+)</text>
        <dbReference type="Rhea" id="RHEA:50484"/>
        <dbReference type="Rhea" id="RHEA-COMP:12694"/>
        <dbReference type="Rhea" id="RHEA-COMP:12695"/>
        <dbReference type="ChEBI" id="CHEBI:15378"/>
        <dbReference type="ChEBI" id="CHEBI:57287"/>
        <dbReference type="ChEBI" id="CHEBI:57288"/>
        <dbReference type="ChEBI" id="CHEBI:133356"/>
        <dbReference type="ChEBI" id="CHEBI:133358"/>
        <dbReference type="EC" id="2.3.1.254"/>
    </reaction>
</comment>
<comment type="catalytic activity">
    <reaction evidence="2">
        <text>N-terminal L-methionyl-L-glutaminyl-[protein] + acetyl-CoA = N-terminal N(alpha)-acetyl-L-methionyl-L-glutaminyl-[protein] + CoA + H(+)</text>
        <dbReference type="Rhea" id="RHEA:50492"/>
        <dbReference type="Rhea" id="RHEA-COMP:12698"/>
        <dbReference type="Rhea" id="RHEA-COMP:12699"/>
        <dbReference type="ChEBI" id="CHEBI:15378"/>
        <dbReference type="ChEBI" id="CHEBI:57287"/>
        <dbReference type="ChEBI" id="CHEBI:57288"/>
        <dbReference type="ChEBI" id="CHEBI:133361"/>
        <dbReference type="ChEBI" id="CHEBI:133362"/>
        <dbReference type="EC" id="2.3.1.254"/>
    </reaction>
</comment>
<comment type="catalytic activity">
    <reaction evidence="2">
        <text>N-terminal L-methionyl-L-aspartyl-[protein] + acetyl-CoA = N-terminal N(alpha)-acetyl-L-methionyl-L-aspartyl-[protein] + CoA + H(+)</text>
        <dbReference type="Rhea" id="RHEA:50480"/>
        <dbReference type="Rhea" id="RHEA-COMP:12692"/>
        <dbReference type="Rhea" id="RHEA-COMP:12693"/>
        <dbReference type="ChEBI" id="CHEBI:15378"/>
        <dbReference type="ChEBI" id="CHEBI:57287"/>
        <dbReference type="ChEBI" id="CHEBI:57288"/>
        <dbReference type="ChEBI" id="CHEBI:133045"/>
        <dbReference type="ChEBI" id="CHEBI:133063"/>
        <dbReference type="EC" id="2.3.1.254"/>
    </reaction>
</comment>
<comment type="catalytic activity">
    <reaction evidence="2">
        <text>N-terminal L-methionyl-L-glutamyl-[protein] + acetyl-CoA = N-terminal N(alpha)-acetyl-L-methionyl-L-glutamyl-[protein] + CoA + H(+)</text>
        <dbReference type="Rhea" id="RHEA:50488"/>
        <dbReference type="Rhea" id="RHEA-COMP:12696"/>
        <dbReference type="Rhea" id="RHEA-COMP:12697"/>
        <dbReference type="ChEBI" id="CHEBI:15378"/>
        <dbReference type="ChEBI" id="CHEBI:57287"/>
        <dbReference type="ChEBI" id="CHEBI:57288"/>
        <dbReference type="ChEBI" id="CHEBI:133359"/>
        <dbReference type="ChEBI" id="CHEBI:133360"/>
        <dbReference type="EC" id="2.3.1.254"/>
    </reaction>
</comment>
<comment type="subunit">
    <text evidence="1">Component of the N-terminal acetyltransferase B (NatB) complex which is composed of naa20 and naa25.</text>
</comment>
<comment type="subcellular location">
    <subcellularLocation>
        <location evidence="2">Cytoplasm</location>
    </subcellularLocation>
    <subcellularLocation>
        <location evidence="2">Nucleus</location>
    </subcellularLocation>
</comment>
<comment type="similarity">
    <text evidence="5">Belongs to the acetyltransferase family. ARD1 subfamily.</text>
</comment>
<feature type="chain" id="PRO_0000249842" description="N-alpha-acetyltransferase 20">
    <location>
        <begin position="1"/>
        <end position="178"/>
    </location>
</feature>
<feature type="domain" description="N-acetyltransferase" evidence="3">
    <location>
        <begin position="2"/>
        <end position="157"/>
    </location>
</feature>
<feature type="region of interest" description="Disordered" evidence="4">
    <location>
        <begin position="159"/>
        <end position="178"/>
    </location>
</feature>
<organism>
    <name type="scientific">Xenopus laevis</name>
    <name type="common">African clawed frog</name>
    <dbReference type="NCBI Taxonomy" id="8355"/>
    <lineage>
        <taxon>Eukaryota</taxon>
        <taxon>Metazoa</taxon>
        <taxon>Chordata</taxon>
        <taxon>Craniata</taxon>
        <taxon>Vertebrata</taxon>
        <taxon>Euteleostomi</taxon>
        <taxon>Amphibia</taxon>
        <taxon>Batrachia</taxon>
        <taxon>Anura</taxon>
        <taxon>Pipoidea</taxon>
        <taxon>Pipidae</taxon>
        <taxon>Xenopodinae</taxon>
        <taxon>Xenopus</taxon>
        <taxon>Xenopus</taxon>
    </lineage>
</organism>
<evidence type="ECO:0000250" key="1"/>
<evidence type="ECO:0000250" key="2">
    <source>
        <dbReference type="UniProtKB" id="P61599"/>
    </source>
</evidence>
<evidence type="ECO:0000255" key="3">
    <source>
        <dbReference type="PROSITE-ProRule" id="PRU00532"/>
    </source>
</evidence>
<evidence type="ECO:0000256" key="4">
    <source>
        <dbReference type="SAM" id="MobiDB-lite"/>
    </source>
</evidence>
<evidence type="ECO:0000305" key="5"/>